<comment type="function">
    <text evidence="1">E1 component of the 2-oxoglutarate dehydrogenase (OGDH) complex which catalyzes the decarboxylation of 2-oxoglutarate, the first step in the conversion of 2-oxoglutarate to succinyl-CoA and CO(2).</text>
</comment>
<comment type="catalytic activity">
    <reaction evidence="1">
        <text>N(6)-[(R)-lipoyl]-L-lysyl-[protein] + 2-oxoglutarate + H(+) = N(6)-[(R)-S(8)-succinyldihydrolipoyl]-L-lysyl-[protein] + CO2</text>
        <dbReference type="Rhea" id="RHEA:12188"/>
        <dbReference type="Rhea" id="RHEA-COMP:10474"/>
        <dbReference type="Rhea" id="RHEA-COMP:20092"/>
        <dbReference type="ChEBI" id="CHEBI:15378"/>
        <dbReference type="ChEBI" id="CHEBI:16526"/>
        <dbReference type="ChEBI" id="CHEBI:16810"/>
        <dbReference type="ChEBI" id="CHEBI:83099"/>
        <dbReference type="ChEBI" id="CHEBI:83120"/>
        <dbReference type="EC" id="1.2.4.2"/>
    </reaction>
</comment>
<comment type="cofactor">
    <cofactor evidence="1">
        <name>thiamine diphosphate</name>
        <dbReference type="ChEBI" id="CHEBI:58937"/>
    </cofactor>
</comment>
<comment type="subunit">
    <text evidence="1">Homodimer. Part of the 2-oxoglutarate dehydrogenase (OGDH) complex composed of E1 (2-oxoglutarate dehydrogenase), E2 (dihydrolipoamide succinyltransferase) and E3 (dihydrolipoamide dehydrogenase); the complex contains multiple copies of the three enzymatic components (E1, E2 and E3).</text>
</comment>
<comment type="similarity">
    <text evidence="1">Belongs to the alpha-ketoglutarate dehydrogenase family.</text>
</comment>
<protein>
    <recommendedName>
        <fullName evidence="1">2-oxoglutarate dehydrogenase E1 component</fullName>
        <ecNumber evidence="1">1.2.4.2</ecNumber>
    </recommendedName>
    <alternativeName>
        <fullName evidence="1">Alpha-ketoglutarate dehydrogenase</fullName>
    </alternativeName>
</protein>
<feature type="chain" id="PRO_1000164359" description="2-oxoglutarate dehydrogenase E1 component">
    <location>
        <begin position="1"/>
        <end position="955"/>
    </location>
</feature>
<gene>
    <name evidence="1" type="primary">odhA</name>
    <name type="ordered locus">BCQ_1324</name>
</gene>
<sequence>MTRKNTTTNPWAKFHGPNLGYVIEQYDLYVTGAGSVDPELQELFEIFGAPSFQDDVVTGDNTATHFSPQNTGNIEKILKVVQLVEQIRSFGHTLAHINPMEDAANGQSLLEKAMNELSDADLKAIPAKTVWQDAPEGIHTALDVIHRLKEVYTQTLAYEFSHIQDSEERAWLHQMVESNSLRQPLSNQKRTALLKRLTAVEGFEQFLHKTFVGQKRFSIEGVDMLVPVLDEIVLEGAKNGVEDVMIGMAHRGRLSVLAHVLEKPYSHMFAEFKHAKIEGAVANSGWTGDVKYHLGREQVVSNEEVSTRVTLANNPSHLEFVNPVVEGFARAAQENRKKSGLPEQDTSKSFVILVHGDAAFPGQGIVSETLNLSRLNAYQTGGTIHVIANNAVGFTTDSYDSRSTKYSSDLAKGFDIPIVHVNADDPEACLAAANLAIQYRMLFKKDFLIDLIGYRRYGHNEMDDPAVTQPQVYKKIKNHPTVRAIYADQLQAAGVLNADEIETITQFTQEQLKSDYAQVPPADTSDATIHVKVPDVVAKGIQSIDTGVELDSLRAINEGLLSWPEGFNVYPKVKKILERRKDALEENGKIEWALAESLAFASILQEGTPIRLTGQDSQRGTFAHRHIVLHDTDTNETYSPLHRLPNINASFSVHNSPLSEAAVVGYEYGYNVFAPETLVMWEAQYGDFSNTAQALFDQYVSAGRAKWGQKSGLVLLLPHGYEGQGPEHSSARPERFLQLAAENNWTVANLTSAAQYFHILRRQASILGTEAVRPLVLMTPKSLLRHPLTLSTASQLSEGRFQPALEQENLGMKPNKVKRLVLSTGKMAIDLAAEIESGKHEYNLDEIHIVRIEQLYPFPAEKVQSIIKRFKNLEEIIWVQEEPRNMGAWHYMAPILFELAGDKVKTGYIGRPDRSSPSGGDPFAHKAEQELIVSHALDVKYNFRQDKLEIEVFSN</sequence>
<accession>B9IU58</accession>
<name>ODO1_BACCQ</name>
<dbReference type="EC" id="1.2.4.2" evidence="1"/>
<dbReference type="EMBL" id="CP000227">
    <property type="protein sequence ID" value="ACM11754.1"/>
    <property type="molecule type" value="Genomic_DNA"/>
</dbReference>
<dbReference type="SMR" id="B9IU58"/>
<dbReference type="KEGG" id="bcq:BCQ_1324"/>
<dbReference type="HOGENOM" id="CLU_004709_1_0_9"/>
<dbReference type="Proteomes" id="UP000000441">
    <property type="component" value="Chromosome"/>
</dbReference>
<dbReference type="GO" id="GO:0005829">
    <property type="term" value="C:cytosol"/>
    <property type="evidence" value="ECO:0007669"/>
    <property type="project" value="TreeGrafter"/>
</dbReference>
<dbReference type="GO" id="GO:0045252">
    <property type="term" value="C:oxoglutarate dehydrogenase complex"/>
    <property type="evidence" value="ECO:0007669"/>
    <property type="project" value="TreeGrafter"/>
</dbReference>
<dbReference type="GO" id="GO:0004591">
    <property type="term" value="F:oxoglutarate dehydrogenase (succinyl-transferring) activity"/>
    <property type="evidence" value="ECO:0007669"/>
    <property type="project" value="UniProtKB-UniRule"/>
</dbReference>
<dbReference type="GO" id="GO:0030976">
    <property type="term" value="F:thiamine pyrophosphate binding"/>
    <property type="evidence" value="ECO:0007669"/>
    <property type="project" value="UniProtKB-UniRule"/>
</dbReference>
<dbReference type="GO" id="GO:0006096">
    <property type="term" value="P:glycolytic process"/>
    <property type="evidence" value="ECO:0007669"/>
    <property type="project" value="UniProtKB-UniRule"/>
</dbReference>
<dbReference type="GO" id="GO:0006099">
    <property type="term" value="P:tricarboxylic acid cycle"/>
    <property type="evidence" value="ECO:0007669"/>
    <property type="project" value="TreeGrafter"/>
</dbReference>
<dbReference type="CDD" id="cd02016">
    <property type="entry name" value="TPP_E1_OGDC_like"/>
    <property type="match status" value="1"/>
</dbReference>
<dbReference type="FunFam" id="3.40.50.11610:FF:000002">
    <property type="entry name" value="2-oxoglutarate dehydrogenase E1 component"/>
    <property type="match status" value="1"/>
</dbReference>
<dbReference type="FunFam" id="3.40.50.970:FF:000036">
    <property type="entry name" value="2-oxoglutarate dehydrogenase E1 component"/>
    <property type="match status" value="1"/>
</dbReference>
<dbReference type="Gene3D" id="3.40.50.12470">
    <property type="match status" value="1"/>
</dbReference>
<dbReference type="Gene3D" id="3.40.50.970">
    <property type="match status" value="1"/>
</dbReference>
<dbReference type="Gene3D" id="3.40.50.11610">
    <property type="entry name" value="Multifunctional 2-oxoglutarate metabolism enzyme, C-terminal domain"/>
    <property type="match status" value="1"/>
</dbReference>
<dbReference type="HAMAP" id="MF_01169">
    <property type="entry name" value="SucA_OdhA"/>
    <property type="match status" value="1"/>
</dbReference>
<dbReference type="InterPro" id="IPR011603">
    <property type="entry name" value="2oxoglutarate_DH_E1"/>
</dbReference>
<dbReference type="InterPro" id="IPR023784">
    <property type="entry name" value="2oxoglutarate_DH_E1_bac"/>
</dbReference>
<dbReference type="InterPro" id="IPR001017">
    <property type="entry name" value="DH_E1"/>
</dbReference>
<dbReference type="InterPro" id="IPR042179">
    <property type="entry name" value="KGD_C_sf"/>
</dbReference>
<dbReference type="InterPro" id="IPR031717">
    <property type="entry name" value="ODO-1/KGD_C"/>
</dbReference>
<dbReference type="InterPro" id="IPR029061">
    <property type="entry name" value="THDP-binding"/>
</dbReference>
<dbReference type="InterPro" id="IPR005475">
    <property type="entry name" value="Transketolase-like_Pyr-bd"/>
</dbReference>
<dbReference type="NCBIfam" id="TIGR00239">
    <property type="entry name" value="2oxo_dh_E1"/>
    <property type="match status" value="1"/>
</dbReference>
<dbReference type="NCBIfam" id="NF006914">
    <property type="entry name" value="PRK09404.1"/>
    <property type="match status" value="1"/>
</dbReference>
<dbReference type="NCBIfam" id="NF008907">
    <property type="entry name" value="PRK12270.1"/>
    <property type="match status" value="1"/>
</dbReference>
<dbReference type="PANTHER" id="PTHR23152:SF4">
    <property type="entry name" value="2-OXOADIPATE DEHYDROGENASE COMPLEX COMPONENT E1"/>
    <property type="match status" value="1"/>
</dbReference>
<dbReference type="PANTHER" id="PTHR23152">
    <property type="entry name" value="2-OXOGLUTARATE DEHYDROGENASE"/>
    <property type="match status" value="1"/>
</dbReference>
<dbReference type="Pfam" id="PF00676">
    <property type="entry name" value="E1_dh"/>
    <property type="match status" value="1"/>
</dbReference>
<dbReference type="Pfam" id="PF16870">
    <property type="entry name" value="OxoGdeHyase_C"/>
    <property type="match status" value="1"/>
</dbReference>
<dbReference type="Pfam" id="PF02779">
    <property type="entry name" value="Transket_pyr"/>
    <property type="match status" value="1"/>
</dbReference>
<dbReference type="PIRSF" id="PIRSF000157">
    <property type="entry name" value="Oxoglu_dh_E1"/>
    <property type="match status" value="1"/>
</dbReference>
<dbReference type="SMART" id="SM00861">
    <property type="entry name" value="Transket_pyr"/>
    <property type="match status" value="1"/>
</dbReference>
<dbReference type="SUPFAM" id="SSF52518">
    <property type="entry name" value="Thiamin diphosphate-binding fold (THDP-binding)"/>
    <property type="match status" value="2"/>
</dbReference>
<keyword id="KW-0324">Glycolysis</keyword>
<keyword id="KW-0560">Oxidoreductase</keyword>
<keyword id="KW-0786">Thiamine pyrophosphate</keyword>
<organism>
    <name type="scientific">Bacillus cereus (strain Q1)</name>
    <dbReference type="NCBI Taxonomy" id="361100"/>
    <lineage>
        <taxon>Bacteria</taxon>
        <taxon>Bacillati</taxon>
        <taxon>Bacillota</taxon>
        <taxon>Bacilli</taxon>
        <taxon>Bacillales</taxon>
        <taxon>Bacillaceae</taxon>
        <taxon>Bacillus</taxon>
        <taxon>Bacillus cereus group</taxon>
    </lineage>
</organism>
<proteinExistence type="inferred from homology"/>
<reference key="1">
    <citation type="journal article" date="2009" name="J. Bacteriol.">
        <title>Complete genome sequence of the extremophilic Bacillus cereus strain Q1 with industrial applications.</title>
        <authorList>
            <person name="Xiong Z."/>
            <person name="Jiang Y."/>
            <person name="Qi D."/>
            <person name="Lu H."/>
            <person name="Yang F."/>
            <person name="Yang J."/>
            <person name="Chen L."/>
            <person name="Sun L."/>
            <person name="Xu X."/>
            <person name="Xue Y."/>
            <person name="Zhu Y."/>
            <person name="Jin Q."/>
        </authorList>
    </citation>
    <scope>NUCLEOTIDE SEQUENCE [LARGE SCALE GENOMIC DNA]</scope>
    <source>
        <strain>Q1</strain>
    </source>
</reference>
<evidence type="ECO:0000255" key="1">
    <source>
        <dbReference type="HAMAP-Rule" id="MF_01169"/>
    </source>
</evidence>